<comment type="function">
    <text evidence="1">Component of the Mediator complex, a coactivator involved in the regulated transcription of nearly all RNA polymerase II-dependent genes. Mediator functions as a bridge to convey information from gene-specific regulatory proteins to the basal RNA polymerase II transcription machinery. Mediator is recruited to promoters by direct interactions with regulatory proteins and serves as a scaffold for the assembly of a functional preinitiation complex with RNA polymerase II and the general transcription factors (By similarity).</text>
</comment>
<comment type="subunit">
    <text evidence="1">Component of the Mediator complex.</text>
</comment>
<comment type="subcellular location">
    <subcellularLocation>
        <location evidence="1">Nucleus</location>
    </subcellularLocation>
</comment>
<comment type="similarity">
    <text evidence="4">Belongs to the Mediator complex subunit 21 family.</text>
</comment>
<name>MED21_CANAL</name>
<gene>
    <name type="primary">SRB7</name>
    <name type="synonym">MED21</name>
    <name type="ordered locus">CAALFM_CR09760WA</name>
    <name type="ORF">CaO19.7548</name>
</gene>
<feature type="chain" id="PRO_0000305960" description="Mediator of RNA polymerase II transcription subunit 21">
    <location>
        <begin position="1"/>
        <end position="178"/>
    </location>
</feature>
<feature type="region of interest" description="Disordered" evidence="3">
    <location>
        <begin position="36"/>
        <end position="91"/>
    </location>
</feature>
<feature type="coiled-coil region" evidence="2">
    <location>
        <begin position="128"/>
        <end position="169"/>
    </location>
</feature>
<feature type="compositionally biased region" description="Low complexity" evidence="3">
    <location>
        <begin position="67"/>
        <end position="85"/>
    </location>
</feature>
<accession>Q5ACU4</accession>
<accession>A0A1D8PU22</accession>
<keyword id="KW-0010">Activator</keyword>
<keyword id="KW-0175">Coiled coil</keyword>
<keyword id="KW-0539">Nucleus</keyword>
<keyword id="KW-1185">Reference proteome</keyword>
<keyword id="KW-0804">Transcription</keyword>
<keyword id="KW-0805">Transcription regulation</keyword>
<reference key="1">
    <citation type="journal article" date="2004" name="Proc. Natl. Acad. Sci. U.S.A.">
        <title>The diploid genome sequence of Candida albicans.</title>
        <authorList>
            <person name="Jones T."/>
            <person name="Federspiel N.A."/>
            <person name="Chibana H."/>
            <person name="Dungan J."/>
            <person name="Kalman S."/>
            <person name="Magee B.B."/>
            <person name="Newport G."/>
            <person name="Thorstenson Y.R."/>
            <person name="Agabian N."/>
            <person name="Magee P.T."/>
            <person name="Davis R.W."/>
            <person name="Scherer S."/>
        </authorList>
    </citation>
    <scope>NUCLEOTIDE SEQUENCE [LARGE SCALE GENOMIC DNA]</scope>
    <source>
        <strain>SC5314 / ATCC MYA-2876</strain>
    </source>
</reference>
<reference key="2">
    <citation type="journal article" date="2007" name="Genome Biol.">
        <title>Assembly of the Candida albicans genome into sixteen supercontigs aligned on the eight chromosomes.</title>
        <authorList>
            <person name="van het Hoog M."/>
            <person name="Rast T.J."/>
            <person name="Martchenko M."/>
            <person name="Grindle S."/>
            <person name="Dignard D."/>
            <person name="Hogues H."/>
            <person name="Cuomo C."/>
            <person name="Berriman M."/>
            <person name="Scherer S."/>
            <person name="Magee B.B."/>
            <person name="Whiteway M."/>
            <person name="Chibana H."/>
            <person name="Nantel A."/>
            <person name="Magee P.T."/>
        </authorList>
    </citation>
    <scope>GENOME REANNOTATION</scope>
    <source>
        <strain>SC5314 / ATCC MYA-2876</strain>
    </source>
</reference>
<reference key="3">
    <citation type="journal article" date="2013" name="Genome Biol.">
        <title>Assembly of a phased diploid Candida albicans genome facilitates allele-specific measurements and provides a simple model for repeat and indel structure.</title>
        <authorList>
            <person name="Muzzey D."/>
            <person name="Schwartz K."/>
            <person name="Weissman J.S."/>
            <person name="Sherlock G."/>
        </authorList>
    </citation>
    <scope>NUCLEOTIDE SEQUENCE [LARGE SCALE GENOMIC DNA]</scope>
    <scope>GENOME REANNOTATION</scope>
    <source>
        <strain>SC5314 / ATCC MYA-2876</strain>
    </source>
</reference>
<organism>
    <name type="scientific">Candida albicans (strain SC5314 / ATCC MYA-2876)</name>
    <name type="common">Yeast</name>
    <dbReference type="NCBI Taxonomy" id="237561"/>
    <lineage>
        <taxon>Eukaryota</taxon>
        <taxon>Fungi</taxon>
        <taxon>Dikarya</taxon>
        <taxon>Ascomycota</taxon>
        <taxon>Saccharomycotina</taxon>
        <taxon>Pichiomycetes</taxon>
        <taxon>Debaryomycetaceae</taxon>
        <taxon>Candida/Lodderomyces clade</taxon>
        <taxon>Candida</taxon>
    </lineage>
</organism>
<proteinExistence type="inferred from homology"/>
<evidence type="ECO:0000250" key="1"/>
<evidence type="ECO:0000255" key="2"/>
<evidence type="ECO:0000256" key="3">
    <source>
        <dbReference type="SAM" id="MobiDB-lite"/>
    </source>
</evidence>
<evidence type="ECO:0000305" key="4"/>
<protein>
    <recommendedName>
        <fullName>Mediator of RNA polymerase II transcription subunit 21</fullName>
    </recommendedName>
    <alternativeName>
        <fullName>Mediator complex subunit 21</fullName>
    </alternativeName>
</protein>
<dbReference type="EMBL" id="CP017630">
    <property type="protein sequence ID" value="AOW31633.1"/>
    <property type="molecule type" value="Genomic_DNA"/>
</dbReference>
<dbReference type="RefSeq" id="XP_719310.1">
    <property type="nucleotide sequence ID" value="XM_714217.1"/>
</dbReference>
<dbReference type="SMR" id="Q5ACU4"/>
<dbReference type="BioGRID" id="1222104">
    <property type="interactions" value="2"/>
</dbReference>
<dbReference type="FunCoup" id="Q5ACU4">
    <property type="interactions" value="300"/>
</dbReference>
<dbReference type="STRING" id="237561.Q5ACU4"/>
<dbReference type="EnsemblFungi" id="CR_09760W_A-T">
    <property type="protein sequence ID" value="CR_09760W_A-T-p1"/>
    <property type="gene ID" value="CR_09760W_A"/>
</dbReference>
<dbReference type="GeneID" id="3639010"/>
<dbReference type="KEGG" id="cal:CAALFM_CR09760WA"/>
<dbReference type="CGD" id="CAL0000199089">
    <property type="gene designation" value="MED21"/>
</dbReference>
<dbReference type="VEuPathDB" id="FungiDB:CR_09760W_A"/>
<dbReference type="eggNOG" id="KOG1510">
    <property type="taxonomic scope" value="Eukaryota"/>
</dbReference>
<dbReference type="HOGENOM" id="CLU_094271_0_1_1"/>
<dbReference type="InParanoid" id="Q5ACU4"/>
<dbReference type="OMA" id="LTTYHDH"/>
<dbReference type="OrthoDB" id="526653at2759"/>
<dbReference type="Proteomes" id="UP000000559">
    <property type="component" value="Chromosome R"/>
</dbReference>
<dbReference type="GO" id="GO:0016592">
    <property type="term" value="C:mediator complex"/>
    <property type="evidence" value="ECO:0000318"/>
    <property type="project" value="GO_Central"/>
</dbReference>
<dbReference type="GO" id="GO:0003712">
    <property type="term" value="F:transcription coregulator activity"/>
    <property type="evidence" value="ECO:0000318"/>
    <property type="project" value="GO_Central"/>
</dbReference>
<dbReference type="GO" id="GO:0006357">
    <property type="term" value="P:regulation of transcription by RNA polymerase II"/>
    <property type="evidence" value="ECO:0000318"/>
    <property type="project" value="GO_Central"/>
</dbReference>
<dbReference type="Gene3D" id="6.10.280.10">
    <property type="entry name" value="Mediator complex, subunit Med21"/>
    <property type="match status" value="1"/>
</dbReference>
<dbReference type="InterPro" id="IPR037212">
    <property type="entry name" value="Med7/Med21-like"/>
</dbReference>
<dbReference type="InterPro" id="IPR021384">
    <property type="entry name" value="Mediator_Med21"/>
</dbReference>
<dbReference type="PANTHER" id="PTHR13381:SF0">
    <property type="entry name" value="MEDIATOR OF RNA POLYMERASE II TRANSCRIPTION SUBUNIT 21"/>
    <property type="match status" value="1"/>
</dbReference>
<dbReference type="PANTHER" id="PTHR13381">
    <property type="entry name" value="RNA POLYMERASE II HOLOENZYME COMPONENT SRB7"/>
    <property type="match status" value="1"/>
</dbReference>
<dbReference type="Pfam" id="PF11221">
    <property type="entry name" value="Med21"/>
    <property type="match status" value="2"/>
</dbReference>
<dbReference type="SUPFAM" id="SSF140718">
    <property type="entry name" value="Mediator hinge subcomplex-like"/>
    <property type="match status" value="1"/>
</dbReference>
<sequence length="178" mass="20289">MADRLTQLQICLDQLIQQFNSTINYVNTSAEPSLLDDDDVNSYSNMAANAPLPQSQQQRQQQKKQQEPQQEIEQPQQQSNPESKSISPPKEKVSFDNVINELCTDLILKSRQIKMLIDSLPGIGVTPNEQMNLINELSDKLQAIEEERIQKIKEKDNLLNLLESMIKEVVNGITETRI</sequence>